<dbReference type="EC" id="3.6.1.54" evidence="1"/>
<dbReference type="EMBL" id="CP001011">
    <property type="protein sequence ID" value="ACB93468.1"/>
    <property type="molecule type" value="Genomic_DNA"/>
</dbReference>
<dbReference type="RefSeq" id="WP_004090305.1">
    <property type="nucleotide sequence ID" value="NC_010577.1"/>
</dbReference>
<dbReference type="SMR" id="B2I9U7"/>
<dbReference type="GeneID" id="93905827"/>
<dbReference type="KEGG" id="xfn:XfasM23_2070"/>
<dbReference type="HOGENOM" id="CLU_074586_0_0_6"/>
<dbReference type="UniPathway" id="UPA00359">
    <property type="reaction ID" value="UER00480"/>
</dbReference>
<dbReference type="Proteomes" id="UP000001698">
    <property type="component" value="Chromosome"/>
</dbReference>
<dbReference type="GO" id="GO:0005737">
    <property type="term" value="C:cytoplasm"/>
    <property type="evidence" value="ECO:0007669"/>
    <property type="project" value="InterPro"/>
</dbReference>
<dbReference type="GO" id="GO:0019897">
    <property type="term" value="C:extrinsic component of plasma membrane"/>
    <property type="evidence" value="ECO:0007669"/>
    <property type="project" value="UniProtKB-UniRule"/>
</dbReference>
<dbReference type="GO" id="GO:0030145">
    <property type="term" value="F:manganese ion binding"/>
    <property type="evidence" value="ECO:0007669"/>
    <property type="project" value="UniProtKB-UniRule"/>
</dbReference>
<dbReference type="GO" id="GO:0008758">
    <property type="term" value="F:UDP-2,3-diacylglucosamine hydrolase activity"/>
    <property type="evidence" value="ECO:0007669"/>
    <property type="project" value="UniProtKB-UniRule"/>
</dbReference>
<dbReference type="GO" id="GO:0009245">
    <property type="term" value="P:lipid A biosynthetic process"/>
    <property type="evidence" value="ECO:0007669"/>
    <property type="project" value="UniProtKB-UniRule"/>
</dbReference>
<dbReference type="CDD" id="cd07398">
    <property type="entry name" value="MPP_YbbF-LpxH"/>
    <property type="match status" value="1"/>
</dbReference>
<dbReference type="Gene3D" id="3.60.21.10">
    <property type="match status" value="1"/>
</dbReference>
<dbReference type="HAMAP" id="MF_00575">
    <property type="entry name" value="LpxH"/>
    <property type="match status" value="1"/>
</dbReference>
<dbReference type="InterPro" id="IPR004843">
    <property type="entry name" value="Calcineurin-like_PHP_ApaH"/>
</dbReference>
<dbReference type="InterPro" id="IPR043461">
    <property type="entry name" value="LpxH-like"/>
</dbReference>
<dbReference type="InterPro" id="IPR029052">
    <property type="entry name" value="Metallo-depent_PP-like"/>
</dbReference>
<dbReference type="InterPro" id="IPR010138">
    <property type="entry name" value="UDP-diacylglucosamine_Hdrlase"/>
</dbReference>
<dbReference type="NCBIfam" id="TIGR01854">
    <property type="entry name" value="lipid_A_lpxH"/>
    <property type="match status" value="1"/>
</dbReference>
<dbReference type="NCBIfam" id="NF003743">
    <property type="entry name" value="PRK05340.1"/>
    <property type="match status" value="1"/>
</dbReference>
<dbReference type="PANTHER" id="PTHR34990:SF1">
    <property type="entry name" value="UDP-2,3-DIACYLGLUCOSAMINE HYDROLASE"/>
    <property type="match status" value="1"/>
</dbReference>
<dbReference type="PANTHER" id="PTHR34990">
    <property type="entry name" value="UDP-2,3-DIACYLGLUCOSAMINE HYDROLASE-RELATED"/>
    <property type="match status" value="1"/>
</dbReference>
<dbReference type="Pfam" id="PF00149">
    <property type="entry name" value="Metallophos"/>
    <property type="match status" value="1"/>
</dbReference>
<dbReference type="SUPFAM" id="SSF56300">
    <property type="entry name" value="Metallo-dependent phosphatases"/>
    <property type="match status" value="1"/>
</dbReference>
<keyword id="KW-0997">Cell inner membrane</keyword>
<keyword id="KW-1003">Cell membrane</keyword>
<keyword id="KW-0378">Hydrolase</keyword>
<keyword id="KW-0441">Lipid A biosynthesis</keyword>
<keyword id="KW-0444">Lipid biosynthesis</keyword>
<keyword id="KW-0443">Lipid metabolism</keyword>
<keyword id="KW-0464">Manganese</keyword>
<keyword id="KW-0472">Membrane</keyword>
<keyword id="KW-0479">Metal-binding</keyword>
<gene>
    <name evidence="1" type="primary">lpxH</name>
    <name type="ordered locus">XfasM23_2070</name>
</gene>
<comment type="function">
    <text evidence="1">Hydrolyzes the pyrophosphate bond of UDP-2,3-diacylglucosamine to yield 2,3-diacylglucosamine 1-phosphate (lipid X) and UMP by catalyzing the attack of water at the alpha-P atom. Involved in the biosynthesis of lipid A, a phosphorylated glycolipid that anchors the lipopolysaccharide to the outer membrane of the cell.</text>
</comment>
<comment type="catalytic activity">
    <reaction evidence="1">
        <text>UDP-2-N,3-O-bis[(3R)-3-hydroxytetradecanoyl]-alpha-D-glucosamine + H2O = 2-N,3-O-bis[(3R)-3-hydroxytetradecanoyl]-alpha-D-glucosaminyl 1-phosphate + UMP + 2 H(+)</text>
        <dbReference type="Rhea" id="RHEA:25213"/>
        <dbReference type="ChEBI" id="CHEBI:15377"/>
        <dbReference type="ChEBI" id="CHEBI:15378"/>
        <dbReference type="ChEBI" id="CHEBI:57865"/>
        <dbReference type="ChEBI" id="CHEBI:57957"/>
        <dbReference type="ChEBI" id="CHEBI:78847"/>
        <dbReference type="EC" id="3.6.1.54"/>
    </reaction>
</comment>
<comment type="cofactor">
    <cofactor evidence="1">
        <name>Mn(2+)</name>
        <dbReference type="ChEBI" id="CHEBI:29035"/>
    </cofactor>
    <text evidence="1">Binds 2 Mn(2+) ions per subunit in a binuclear metal center.</text>
</comment>
<comment type="pathway">
    <text evidence="1">Glycolipid biosynthesis; lipid IV(A) biosynthesis; lipid IV(A) from (3R)-3-hydroxytetradecanoyl-[acyl-carrier-protein] and UDP-N-acetyl-alpha-D-glucosamine: step 4/6.</text>
</comment>
<comment type="subcellular location">
    <subcellularLocation>
        <location evidence="1">Cell inner membrane</location>
        <topology evidence="1">Peripheral membrane protein</topology>
        <orientation evidence="1">Cytoplasmic side</orientation>
    </subcellularLocation>
</comment>
<comment type="similarity">
    <text evidence="1">Belongs to the LpxH family.</text>
</comment>
<proteinExistence type="inferred from homology"/>
<feature type="chain" id="PRO_1000129545" description="UDP-2,3-diacylglucosamine hydrolase">
    <location>
        <begin position="1"/>
        <end position="250"/>
    </location>
</feature>
<feature type="binding site" evidence="1">
    <location>
        <position position="8"/>
    </location>
    <ligand>
        <name>Mn(2+)</name>
        <dbReference type="ChEBI" id="CHEBI:29035"/>
        <label>1</label>
    </ligand>
</feature>
<feature type="binding site" evidence="1">
    <location>
        <position position="10"/>
    </location>
    <ligand>
        <name>Mn(2+)</name>
        <dbReference type="ChEBI" id="CHEBI:29035"/>
        <label>1</label>
    </ligand>
</feature>
<feature type="binding site" evidence="1">
    <location>
        <position position="41"/>
    </location>
    <ligand>
        <name>Mn(2+)</name>
        <dbReference type="ChEBI" id="CHEBI:29035"/>
        <label>1</label>
    </ligand>
</feature>
<feature type="binding site" evidence="1">
    <location>
        <position position="41"/>
    </location>
    <ligand>
        <name>Mn(2+)</name>
        <dbReference type="ChEBI" id="CHEBI:29035"/>
        <label>2</label>
    </ligand>
</feature>
<feature type="binding site" evidence="1">
    <location>
        <begin position="79"/>
        <end position="80"/>
    </location>
    <ligand>
        <name>substrate</name>
    </ligand>
</feature>
<feature type="binding site" evidence="1">
    <location>
        <position position="79"/>
    </location>
    <ligand>
        <name>Mn(2+)</name>
        <dbReference type="ChEBI" id="CHEBI:29035"/>
        <label>2</label>
    </ligand>
</feature>
<feature type="binding site" evidence="1">
    <location>
        <position position="114"/>
    </location>
    <ligand>
        <name>Mn(2+)</name>
        <dbReference type="ChEBI" id="CHEBI:29035"/>
        <label>2</label>
    </ligand>
</feature>
<feature type="binding site" evidence="1">
    <location>
        <position position="122"/>
    </location>
    <ligand>
        <name>substrate</name>
    </ligand>
</feature>
<feature type="binding site" evidence="1">
    <location>
        <position position="160"/>
    </location>
    <ligand>
        <name>substrate</name>
    </ligand>
</feature>
<feature type="binding site" evidence="1">
    <location>
        <position position="172"/>
    </location>
    <ligand>
        <name>substrate</name>
    </ligand>
</feature>
<feature type="binding site" evidence="1">
    <location>
        <position position="175"/>
    </location>
    <ligand>
        <name>substrate</name>
    </ligand>
</feature>
<feature type="binding site" evidence="1">
    <location>
        <position position="203"/>
    </location>
    <ligand>
        <name>Mn(2+)</name>
        <dbReference type="ChEBI" id="CHEBI:29035"/>
        <label>2</label>
    </ligand>
</feature>
<feature type="binding site" evidence="1">
    <location>
        <position position="203"/>
    </location>
    <ligand>
        <name>substrate</name>
    </ligand>
</feature>
<feature type="binding site" evidence="1">
    <location>
        <position position="205"/>
    </location>
    <ligand>
        <name>Mn(2+)</name>
        <dbReference type="ChEBI" id="CHEBI:29035"/>
        <label>1</label>
    </ligand>
</feature>
<evidence type="ECO:0000255" key="1">
    <source>
        <dbReference type="HAMAP-Rule" id="MF_00575"/>
    </source>
</evidence>
<sequence length="250" mass="27587">MTTLIISDLHLDPLRPVVTELFLRFLREQVSGADALYILGDLFEIWIGDDMPSEVADMVVAALRTHADAGTPLYFMPGNRDFLVGADYAARAGFRILPDPCVVDLYGEPTLLLHGDLLCTDDIAYQAFRAQTRDPEFIAQFLTQTLSARLAFAQQARLASHAHQSGLKQENDSTQFEKITDVVPADVAAMFACYGVNRMIHGHTHRPALHMLQVAECACTRVVLGDWYQQGSVLCVDADGLVLEQLLLPG</sequence>
<protein>
    <recommendedName>
        <fullName evidence="1">UDP-2,3-diacylglucosamine hydrolase</fullName>
        <ecNumber evidence="1">3.6.1.54</ecNumber>
    </recommendedName>
    <alternativeName>
        <fullName evidence="1">UDP-2,3-diacylglucosamine diphosphatase</fullName>
    </alternativeName>
</protein>
<organism>
    <name type="scientific">Xylella fastidiosa (strain M23)</name>
    <dbReference type="NCBI Taxonomy" id="405441"/>
    <lineage>
        <taxon>Bacteria</taxon>
        <taxon>Pseudomonadati</taxon>
        <taxon>Pseudomonadota</taxon>
        <taxon>Gammaproteobacteria</taxon>
        <taxon>Lysobacterales</taxon>
        <taxon>Lysobacteraceae</taxon>
        <taxon>Xylella</taxon>
    </lineage>
</organism>
<name>LPXH_XYLF2</name>
<accession>B2I9U7</accession>
<reference key="1">
    <citation type="journal article" date="2010" name="J. Bacteriol.">
        <title>Whole genome sequences of two Xylella fastidiosa strains (M12 and M23) causing almond leaf scorch disease in California.</title>
        <authorList>
            <person name="Chen J."/>
            <person name="Xie G."/>
            <person name="Han S."/>
            <person name="Chertkov O."/>
            <person name="Sims D."/>
            <person name="Civerolo E.L."/>
        </authorList>
    </citation>
    <scope>NUCLEOTIDE SEQUENCE [LARGE SCALE GENOMIC DNA]</scope>
    <source>
        <strain>M23</strain>
    </source>
</reference>